<dbReference type="EMBL" id="X55294">
    <property type="protein sequence ID" value="CAA39006.1"/>
    <property type="molecule type" value="mRNA"/>
</dbReference>
<dbReference type="PIR" id="A36686">
    <property type="entry name" value="A36686"/>
</dbReference>
<dbReference type="RefSeq" id="NP_001009807.1">
    <property type="nucleotide sequence ID" value="NM_001009807.1"/>
</dbReference>
<dbReference type="Ensembl" id="ENSOART00220099119">
    <property type="protein sequence ID" value="ENSOARP00220051890"/>
    <property type="gene ID" value="ENSOARG00220060019"/>
</dbReference>
<dbReference type="GeneID" id="443402"/>
<dbReference type="Proteomes" id="UP000002356">
    <property type="component" value="Unplaced"/>
</dbReference>
<dbReference type="GO" id="GO:0005576">
    <property type="term" value="C:extracellular region"/>
    <property type="evidence" value="ECO:0007669"/>
    <property type="project" value="InterPro"/>
</dbReference>
<dbReference type="GO" id="GO:0005882">
    <property type="term" value="C:intermediate filament"/>
    <property type="evidence" value="ECO:0007669"/>
    <property type="project" value="UniProtKB-KW"/>
</dbReference>
<dbReference type="GO" id="GO:0006952">
    <property type="term" value="P:defense response"/>
    <property type="evidence" value="ECO:0007669"/>
    <property type="project" value="InterPro"/>
</dbReference>
<dbReference type="InterPro" id="IPR006081">
    <property type="entry name" value="Alpha-defensin_C"/>
</dbReference>
<comment type="function">
    <text>The keratin products of mammalian epidermal derivatives such as wool and hair consist of microfibrils embedded in a rigid matrix of other proteins. The matrix proteins include the high-sulfur and high-tyrosine keratins, having molecular weights of 6-20 kDa, whereas the microfibrils contain the larger, low-sulfur keratins (40-56 kDa).</text>
</comment>
<comment type="tissue specificity">
    <text>Cuticle layers of differentiating wool follicles.</text>
</comment>
<comment type="developmental stage">
    <text>At a late stage of fiber differentiation.</text>
</comment>
<comment type="domain">
    <text>Mainly composed of Cys-rich (CR), Gly-rich (GR) and Ser-rich (SR) repeats.</text>
</comment>
<comment type="similarity">
    <text evidence="1">Belongs to the KRTAP type 5 family.</text>
</comment>
<proteinExistence type="evidence at transcript level"/>
<sequence length="182" mass="16101">MGCSGCSGGCGSSCGGCGSRCGGCSSSCCVPVCCCKPVCCCVPACSCSSCGKGGCGSSCGGSKGGCGSCGGSKGGCGSCGGCGSSCCKPVCCCVPACSCSSCGKGGCGSCGGSKGGCGSCGGSKGGCGSCGGCGSGCGSSCCVPVCCCVPACSCSSCGKGGCGSCGCSQSSCCVPVCCQRKI</sequence>
<evidence type="ECO:0000305" key="1"/>
<accession>P26372</accession>
<feature type="chain" id="PRO_0000184110" description="Keratin, ultra high-sulfur matrix protein">
    <location>
        <begin position="1"/>
        <end position="182"/>
    </location>
</feature>
<reference key="1">
    <citation type="journal article" date="1990" name="J. Cell Biol.">
        <title>Structure and expression of genes for a class of cysteine-rich proteins of the cuticle layers of differentiating wool and hair follicles.</title>
        <authorList>
            <person name="McKinnon P.J."/>
            <person name="Powell B.C."/>
            <person name="Rogers G.E."/>
        </authorList>
    </citation>
    <scope>NUCLEOTIDE SEQUENCE [MRNA]</scope>
    <source>
        <tissue>Hair follicle</tissue>
    </source>
</reference>
<protein>
    <recommendedName>
        <fullName>Keratin, ultra high-sulfur matrix protein</fullName>
    </recommendedName>
    <alternativeName>
        <fullName>UHS keratin</fullName>
    </alternativeName>
</protein>
<keyword id="KW-0416">Keratin</keyword>
<keyword id="KW-1185">Reference proteome</keyword>
<keyword id="KW-0677">Repeat</keyword>
<name>KRUC_SHEEP</name>
<organism>
    <name type="scientific">Ovis aries</name>
    <name type="common">Sheep</name>
    <dbReference type="NCBI Taxonomy" id="9940"/>
    <lineage>
        <taxon>Eukaryota</taxon>
        <taxon>Metazoa</taxon>
        <taxon>Chordata</taxon>
        <taxon>Craniata</taxon>
        <taxon>Vertebrata</taxon>
        <taxon>Euteleostomi</taxon>
        <taxon>Mammalia</taxon>
        <taxon>Eutheria</taxon>
        <taxon>Laurasiatheria</taxon>
        <taxon>Artiodactyla</taxon>
        <taxon>Ruminantia</taxon>
        <taxon>Pecora</taxon>
        <taxon>Bovidae</taxon>
        <taxon>Caprinae</taxon>
        <taxon>Ovis</taxon>
    </lineage>
</organism>